<feature type="chain" id="PRO_0000221581" description="Trichodiene synthase">
    <location>
        <begin position="1"/>
        <end position="375"/>
    </location>
</feature>
<reference key="1">
    <citation type="journal article" date="2002" name="Proc. Natl. Acad. Sci. U.S.A.">
        <title>Ancestral polymorphism and adaptive evolution in the trichothecene mycotoxin gene cluster of phytopathogenic Fusarium.</title>
        <authorList>
            <person name="Ward T.J."/>
            <person name="Bielawski J.P."/>
            <person name="Kistler H.C."/>
            <person name="Sullivan E."/>
            <person name="O'Donnell K."/>
        </authorList>
    </citation>
    <scope>NUCLEOTIDE SEQUENCE [GENOMIC DNA]</scope>
    <source>
        <strain>CBS 110252 / FRC-R-4079 / NRRL 29148</strain>
    </source>
</reference>
<evidence type="ECO:0000305" key="1"/>
<keyword id="KW-0456">Lyase</keyword>
<gene>
    <name type="primary">TRI5</name>
</gene>
<comment type="function">
    <text>TS is a member of the terpene cyclase group of enzymes. It catalyzes the isomerization and cyclization of farnesyl pyro-phosphate to form trichodiene, the first cyclic intermediate in the biosynthetic pathway for trichothecenes. It serves to branch trichothecene biosynthesis from the isoprenoid pathway.</text>
</comment>
<comment type="catalytic activity">
    <reaction>
        <text>(2E,6E)-farnesyl diphosphate = trichodiene + diphosphate</text>
        <dbReference type="Rhea" id="RHEA:12052"/>
        <dbReference type="ChEBI" id="CHEBI:15861"/>
        <dbReference type="ChEBI" id="CHEBI:33019"/>
        <dbReference type="ChEBI" id="CHEBI:175763"/>
        <dbReference type="EC" id="4.2.3.6"/>
    </reaction>
</comment>
<comment type="pathway">
    <text>Sesquiterpene biosynthesis; trichothecene biosynthesis.</text>
</comment>
<comment type="miscellaneous">
    <text>Trichothecenes are sesquiterpenoid toxins that act by inhibiting protein biosynthesis.</text>
</comment>
<comment type="similarity">
    <text evidence="1">Belongs to the trichodiene synthase family.</text>
</comment>
<accession>Q8NJA1</accession>
<name>TRI5_FUSMI</name>
<sequence length="375" mass="43952">MENFPTEYFLNTSVRLLEYIRYRDSNYTREERIENLHYAYNKAAHHFAQPRQQQMLKVDPKRLQASLQTIVGMVVYSWAKVSKECMADLSIHYTYTLVLDDSSDDPHPAMLNYFDDLQAGREQSHPWWALVNEHFPNVLRHFGPFCSLNLIRSTMDFFEGCWIEQYNFGGFPGSDDYPQFLRRMNGLGHCVGASLWPKDLFDERKNFLEITTAVAQMENWMVWVNDLMSFYKEFDDERDQISLVKNFVTCHEITLDEALEKLTQETLHSSKQMVAVFADKDPQVMDTIECFMHGYVTWHLCDARYRLHEIYEKVKDQDTEDAKKFCKFFEQAANVGAVAPSEWAYPQVAQLANVRAKDDMKEGQKPILSSIELVE</sequence>
<proteinExistence type="inferred from homology"/>
<dbReference type="EC" id="4.2.3.6"/>
<dbReference type="EMBL" id="AY102598">
    <property type="protein sequence ID" value="AAM48998.1"/>
    <property type="molecule type" value="Genomic_DNA"/>
</dbReference>
<dbReference type="SMR" id="Q8NJA1"/>
<dbReference type="UniPathway" id="UPA00267"/>
<dbReference type="GO" id="GO:0045482">
    <property type="term" value="F:trichodiene synthase activity"/>
    <property type="evidence" value="ECO:0007669"/>
    <property type="project" value="UniProtKB-EC"/>
</dbReference>
<dbReference type="GO" id="GO:0016106">
    <property type="term" value="P:sesquiterpenoid biosynthetic process"/>
    <property type="evidence" value="ECO:0007669"/>
    <property type="project" value="InterPro"/>
</dbReference>
<dbReference type="Gene3D" id="1.10.600.10">
    <property type="entry name" value="Farnesyl Diphosphate Synthase"/>
    <property type="match status" value="1"/>
</dbReference>
<dbReference type="InterPro" id="IPR008949">
    <property type="entry name" value="Isoprenoid_synthase_dom_sf"/>
</dbReference>
<dbReference type="InterPro" id="IPR010458">
    <property type="entry name" value="TRI5_ascomyc"/>
</dbReference>
<dbReference type="InterPro" id="IPR024652">
    <property type="entry name" value="Trichodiene_synth"/>
</dbReference>
<dbReference type="Pfam" id="PF06330">
    <property type="entry name" value="TRI5"/>
    <property type="match status" value="1"/>
</dbReference>
<dbReference type="PIRSF" id="PIRSF001388">
    <property type="entry name" value="TRI5"/>
    <property type="match status" value="1"/>
</dbReference>
<dbReference type="SFLD" id="SFLDS00005">
    <property type="entry name" value="Isoprenoid_Synthase_Type_I"/>
    <property type="match status" value="1"/>
</dbReference>
<dbReference type="SFLD" id="SFLDG01021">
    <property type="entry name" value="Trichodiene_Synthase_Like"/>
    <property type="match status" value="1"/>
</dbReference>
<dbReference type="SUPFAM" id="SSF48576">
    <property type="entry name" value="Terpenoid synthases"/>
    <property type="match status" value="1"/>
</dbReference>
<protein>
    <recommendedName>
        <fullName>Trichodiene synthase</fullName>
        <ecNumber>4.2.3.6</ecNumber>
    </recommendedName>
    <alternativeName>
        <fullName>Sesquiterpene cyclase</fullName>
        <shortName>TS</shortName>
    </alternativeName>
</protein>
<organism>
    <name type="scientific">Fusarium mesoamericanum</name>
    <dbReference type="NCBI Taxonomy" id="282270"/>
    <lineage>
        <taxon>Eukaryota</taxon>
        <taxon>Fungi</taxon>
        <taxon>Dikarya</taxon>
        <taxon>Ascomycota</taxon>
        <taxon>Pezizomycotina</taxon>
        <taxon>Sordariomycetes</taxon>
        <taxon>Hypocreomycetidae</taxon>
        <taxon>Hypocreales</taxon>
        <taxon>Nectriaceae</taxon>
        <taxon>Fusarium</taxon>
    </lineage>
</organism>